<keyword id="KW-0002">3D-structure</keyword>
<keyword id="KW-0326">Glycosidase</keyword>
<keyword id="KW-0378">Hydrolase</keyword>
<organism>
    <name type="scientific">Bifidobacterium longum subsp. infantis</name>
    <dbReference type="NCBI Taxonomy" id="1682"/>
    <lineage>
        <taxon>Bacteria</taxon>
        <taxon>Bacillati</taxon>
        <taxon>Actinomycetota</taxon>
        <taxon>Actinomycetes</taxon>
        <taxon>Bifidobacteriales</taxon>
        <taxon>Bifidobacteriaceae</taxon>
        <taxon>Bifidobacterium</taxon>
    </lineage>
</organism>
<proteinExistence type="evidence at protein level"/>
<feature type="chain" id="PRO_0000407685" description="Beta-galactosidase III">
    <location>
        <begin position="1"/>
        <end position="691"/>
    </location>
</feature>
<feature type="active site" description="Proton donor" evidence="1">
    <location>
        <position position="160"/>
    </location>
</feature>
<feature type="active site" description="Nucleophile" evidence="1">
    <location>
        <position position="318"/>
    </location>
</feature>
<feature type="binding site" evidence="1">
    <location>
        <position position="121"/>
    </location>
    <ligand>
        <name>substrate</name>
    </ligand>
</feature>
<feature type="binding site" evidence="1">
    <location>
        <position position="159"/>
    </location>
    <ligand>
        <name>substrate</name>
    </ligand>
</feature>
<feature type="binding site" evidence="1">
    <location>
        <position position="326"/>
    </location>
    <ligand>
        <name>substrate</name>
    </ligand>
</feature>
<feature type="binding site" evidence="1">
    <location>
        <begin position="366"/>
        <end position="369"/>
    </location>
    <ligand>
        <name>substrate</name>
    </ligand>
</feature>
<feature type="strand" evidence="7">
    <location>
        <begin position="20"/>
        <end position="24"/>
    </location>
</feature>
<feature type="helix" evidence="7">
    <location>
        <begin position="27"/>
        <end position="29"/>
    </location>
</feature>
<feature type="helix" evidence="7">
    <location>
        <begin position="32"/>
        <end position="45"/>
    </location>
</feature>
<feature type="strand" evidence="7">
    <location>
        <begin position="49"/>
        <end position="52"/>
    </location>
</feature>
<feature type="helix" evidence="7">
    <location>
        <begin position="57"/>
        <end position="60"/>
    </location>
</feature>
<feature type="strand" evidence="7">
    <location>
        <begin position="61"/>
        <end position="63"/>
    </location>
</feature>
<feature type="helix" evidence="7">
    <location>
        <begin position="70"/>
        <end position="81"/>
    </location>
</feature>
<feature type="strand" evidence="7">
    <location>
        <begin position="85"/>
        <end position="89"/>
    </location>
</feature>
<feature type="helix" evidence="7">
    <location>
        <begin position="97"/>
        <end position="102"/>
    </location>
</feature>
<feature type="helix" evidence="7">
    <location>
        <begin position="104"/>
        <end position="106"/>
    </location>
</feature>
<feature type="strand" evidence="7">
    <location>
        <begin position="118"/>
        <end position="121"/>
    </location>
</feature>
<feature type="helix" evidence="7">
    <location>
        <begin position="129"/>
        <end position="146"/>
    </location>
</feature>
<feature type="strand" evidence="7">
    <location>
        <begin position="152"/>
        <end position="156"/>
    </location>
</feature>
<feature type="strand" evidence="7">
    <location>
        <begin position="158"/>
        <end position="160"/>
    </location>
</feature>
<feature type="turn" evidence="7">
    <location>
        <begin position="161"/>
        <end position="165"/>
    </location>
</feature>
<feature type="helix" evidence="7">
    <location>
        <begin position="171"/>
        <end position="185"/>
    </location>
</feature>
<feature type="helix" evidence="7">
    <location>
        <begin position="188"/>
        <end position="194"/>
    </location>
</feature>
<feature type="turn" evidence="7">
    <location>
        <begin position="195"/>
        <end position="198"/>
    </location>
</feature>
<feature type="helix" evidence="7">
    <location>
        <begin position="199"/>
        <end position="201"/>
    </location>
</feature>
<feature type="helix" evidence="7">
    <location>
        <begin position="207"/>
        <end position="209"/>
    </location>
</feature>
<feature type="helix" evidence="7">
    <location>
        <begin position="224"/>
        <end position="252"/>
    </location>
</feature>
<feature type="helix" evidence="7">
    <location>
        <begin position="272"/>
        <end position="275"/>
    </location>
</feature>
<feature type="strand" evidence="7">
    <location>
        <begin position="278"/>
        <end position="281"/>
    </location>
</feature>
<feature type="strand" evidence="7">
    <location>
        <begin position="283"/>
        <end position="285"/>
    </location>
</feature>
<feature type="helix" evidence="7">
    <location>
        <begin position="291"/>
        <end position="293"/>
    </location>
</feature>
<feature type="helix" evidence="7">
    <location>
        <begin position="294"/>
        <end position="308"/>
    </location>
</feature>
<feature type="turn" evidence="7">
    <location>
        <begin position="309"/>
        <end position="311"/>
    </location>
</feature>
<feature type="strand" evidence="7">
    <location>
        <begin position="314"/>
        <end position="318"/>
    </location>
</feature>
<feature type="strand" evidence="7">
    <location>
        <begin position="325"/>
        <end position="329"/>
    </location>
</feature>
<feature type="helix" evidence="7">
    <location>
        <begin position="337"/>
        <end position="347"/>
    </location>
</feature>
<feature type="strand" evidence="7">
    <location>
        <begin position="350"/>
        <end position="356"/>
    </location>
</feature>
<feature type="strand" evidence="7">
    <location>
        <begin position="362"/>
        <end position="364"/>
    </location>
</feature>
<feature type="turn" evidence="7">
    <location>
        <begin position="365"/>
        <end position="368"/>
    </location>
</feature>
<feature type="strand" evidence="7">
    <location>
        <begin position="378"/>
        <end position="380"/>
    </location>
</feature>
<feature type="helix" evidence="7">
    <location>
        <begin position="381"/>
        <end position="398"/>
    </location>
</feature>
<feature type="strand" evidence="7">
    <location>
        <begin position="410"/>
        <end position="415"/>
    </location>
</feature>
<feature type="helix" evidence="7">
    <location>
        <begin position="417"/>
        <end position="423"/>
    </location>
</feature>
<feature type="strand" evidence="8">
    <location>
        <begin position="428"/>
        <end position="430"/>
    </location>
</feature>
<feature type="helix" evidence="7">
    <location>
        <begin position="437"/>
        <end position="448"/>
    </location>
</feature>
<feature type="strand" evidence="7">
    <location>
        <begin position="454"/>
        <end position="457"/>
    </location>
</feature>
<feature type="helix" evidence="7">
    <location>
        <begin position="462"/>
        <end position="464"/>
    </location>
</feature>
<feature type="strand" evidence="7">
    <location>
        <begin position="465"/>
        <end position="470"/>
    </location>
</feature>
<feature type="helix" evidence="7">
    <location>
        <begin position="478"/>
        <end position="489"/>
    </location>
</feature>
<feature type="strand" evidence="7">
    <location>
        <begin position="493"/>
        <end position="497"/>
    </location>
</feature>
<feature type="strand" evidence="7">
    <location>
        <begin position="500"/>
        <end position="503"/>
    </location>
</feature>
<feature type="strand" evidence="7">
    <location>
        <begin position="512"/>
        <end position="515"/>
    </location>
</feature>
<feature type="turn" evidence="7">
    <location>
        <begin position="516"/>
        <end position="518"/>
    </location>
</feature>
<feature type="helix" evidence="7">
    <location>
        <begin position="519"/>
        <end position="522"/>
    </location>
</feature>
<feature type="strand" evidence="7">
    <location>
        <begin position="524"/>
        <end position="531"/>
    </location>
</feature>
<feature type="strand" evidence="7">
    <location>
        <begin position="543"/>
        <end position="545"/>
    </location>
</feature>
<feature type="strand" evidence="7">
    <location>
        <begin position="550"/>
        <end position="561"/>
    </location>
</feature>
<feature type="strand" evidence="7">
    <location>
        <begin position="565"/>
        <end position="572"/>
    </location>
</feature>
<feature type="helix" evidence="7">
    <location>
        <begin position="575"/>
        <end position="577"/>
    </location>
</feature>
<feature type="strand" evidence="7">
    <location>
        <begin position="583"/>
        <end position="590"/>
    </location>
</feature>
<feature type="strand" evidence="7">
    <location>
        <begin position="593"/>
        <end position="598"/>
    </location>
</feature>
<feature type="helix" evidence="7">
    <location>
        <begin position="603"/>
        <end position="617"/>
    </location>
</feature>
<feature type="turn" evidence="7">
    <location>
        <begin position="626"/>
        <end position="629"/>
    </location>
</feature>
<feature type="strand" evidence="7">
    <location>
        <begin position="630"/>
        <end position="637"/>
    </location>
</feature>
<feature type="strand" evidence="7">
    <location>
        <begin position="639"/>
        <end position="650"/>
    </location>
</feature>
<feature type="strand" evidence="7">
    <location>
        <begin position="652"/>
        <end position="654"/>
    </location>
</feature>
<feature type="strand" evidence="7">
    <location>
        <begin position="656"/>
        <end position="659"/>
    </location>
</feature>
<feature type="strand" evidence="7">
    <location>
        <begin position="662"/>
        <end position="673"/>
    </location>
</feature>
<feature type="turn" evidence="7">
    <location>
        <begin position="674"/>
        <end position="677"/>
    </location>
</feature>
<feature type="strand" evidence="7">
    <location>
        <begin position="678"/>
        <end position="690"/>
    </location>
</feature>
<reference evidence="5 6" key="1">
    <citation type="journal article" date="2001" name="Appl. Environ. Microbiol.">
        <title>Molecular and biochemical analysis of two beta-galactosidases from Bifidobacterium infantis HL96.</title>
        <authorList>
            <person name="Hung M.N."/>
            <person name="Xia Z."/>
            <person name="Hu N.T."/>
            <person name="Lee B.H."/>
        </authorList>
    </citation>
    <scope>NUCLEOTIDE SEQUENCE [GENOMIC DNA]</scope>
    <scope>FUNCTION</scope>
    <scope>CATALYTIC ACTIVITY</scope>
    <scope>SUBSTRATE SPECIFICITY</scope>
    <source>
        <strain evidence="6">HL96</strain>
    </source>
</reference>
<evidence type="ECO:0000250" key="1">
    <source>
        <dbReference type="UniProtKB" id="O69315"/>
    </source>
</evidence>
<evidence type="ECO:0000250" key="2">
    <source>
        <dbReference type="UniProtKB" id="P19668"/>
    </source>
</evidence>
<evidence type="ECO:0000255" key="3"/>
<evidence type="ECO:0000269" key="4">
    <source>
    </source>
</evidence>
<evidence type="ECO:0000305" key="5"/>
<evidence type="ECO:0000312" key="6">
    <source>
        <dbReference type="EMBL" id="AAL02053.1"/>
    </source>
</evidence>
<evidence type="ECO:0007829" key="7">
    <source>
        <dbReference type="PDB" id="8IBR"/>
    </source>
</evidence>
<evidence type="ECO:0007829" key="8">
    <source>
        <dbReference type="PDB" id="8IBS"/>
    </source>
</evidence>
<protein>
    <recommendedName>
        <fullName evidence="6">Beta-galactosidase III</fullName>
        <shortName evidence="2">Beta-gal</shortName>
        <ecNumber>3.2.1.23</ecNumber>
    </recommendedName>
</protein>
<sequence length="691" mass="77453">MEHRAFKWPQPLAGNKPRIWYVGDYNPDQWPEEVWDEDVALMQQAGVNLVSVAIFSWAKLEPEEGVYDFDWLDRVIDKLGKAGIAVDLASGTASPPMWMTQAHPEILWVDYRGDVCQPGARQHWRATSPVFLDYALNLCRKMAEHYKDNPYVVSWHVSNEYGCHNRFDYSEDAERAFQKWCEKKYGTIDAVNDAWGTAFWAQRMNNFSEIIPPRFIGDGNFMNPGKLLDWKRFSSDALLDFYKAERDALLEIAPKPQTTNFMVSAGCTVLDYDKWGHDVDFVSNDHYFSPGEAHFDEMAYAACLTDGIARKNPWFLMEHSTSAVNWRPTNYRLEPGELVRDSLAHLAMGADAICYFQWRQSKAGAEKWHSAMVPHAGPDSQIFRDVCELGADLNKLADEGLLSTKLVKSKVAVVFDYESQWATEHTATPTQEVRHWTEPLDWFRALADNGLTADVVPVRGPWDEYEAVVLPSLAILSEQTTRRVREYVANGGKLFVTYYTGLVDDRDHVWLGGYPGSIRDVVGVRVEEFAPMGTDAPGTMDHLDLDNGTVAHDFADVITSVADTAHVVASFKADKWTGFDGAPAITVNDFGDGKAAYVGARLGREGLAKSLPALLEELGIETSAEDDRGEVVRVERADETGENHFVFLFNRTHDVAVVDVEGEPLVASLAQVNESEHTAAIQPNGVLVVKL</sequence>
<comment type="function">
    <text evidence="4">Specific for beta-D-anomer-linked galactoside substrates. Hydrolyzes o-nitrophenyl-beta-D-galactopyranoside (ONPG), chromogen 5-bromo-4-chloro-3-indolyl-beta-D-galactopyranoside (X-gal) and to a lesser extent lactose. Hydrolyzes p-nitrophenyl-beta-D-galacturonide very slightly. Does not hydrolyze maltose, sucrose, raffinose or melibiose. Has some transgalactosylation activity yielding galacto-oligosaccharides (GaOS), including O-beta-D-galactopyranosyl-(1,3)-O-beta-D-galactopyranosyl-(1-4)-D-glucopyranose.</text>
</comment>
<comment type="catalytic activity">
    <reaction evidence="4">
        <text>Hydrolysis of terminal non-reducing beta-D-galactose residues in beta-D-galactosides.</text>
        <dbReference type="EC" id="3.2.1.23"/>
    </reaction>
</comment>
<comment type="similarity">
    <text evidence="3">Belongs to the glycosyl hydrolase 42 family.</text>
</comment>
<gene>
    <name evidence="6" type="primary">beta-galIII</name>
</gene>
<dbReference type="EC" id="3.2.1.23"/>
<dbReference type="EMBL" id="AF192266">
    <property type="protein sequence ID" value="AAL02053.1"/>
    <property type="molecule type" value="Genomic_DNA"/>
</dbReference>
<dbReference type="PDB" id="8IBR">
    <property type="method" value="X-ray"/>
    <property type="resolution" value="1.70 A"/>
    <property type="chains" value="A=1-691"/>
</dbReference>
<dbReference type="PDB" id="8IBS">
    <property type="method" value="X-ray"/>
    <property type="resolution" value="1.90 A"/>
    <property type="chains" value="A/B/C/D/E/F=1-691"/>
</dbReference>
<dbReference type="PDB" id="8IBT">
    <property type="method" value="X-ray"/>
    <property type="resolution" value="2.20 A"/>
    <property type="chains" value="A/B=1-691"/>
</dbReference>
<dbReference type="PDBsum" id="8IBR"/>
<dbReference type="PDBsum" id="8IBS"/>
<dbReference type="PDBsum" id="8IBT"/>
<dbReference type="SMR" id="Q93GI5"/>
<dbReference type="CAZy" id="GH42">
    <property type="family name" value="Glycoside Hydrolase Family 42"/>
</dbReference>
<dbReference type="GO" id="GO:0009341">
    <property type="term" value="C:beta-galactosidase complex"/>
    <property type="evidence" value="ECO:0007669"/>
    <property type="project" value="InterPro"/>
</dbReference>
<dbReference type="GO" id="GO:0004565">
    <property type="term" value="F:beta-galactosidase activity"/>
    <property type="evidence" value="ECO:0007669"/>
    <property type="project" value="UniProtKB-EC"/>
</dbReference>
<dbReference type="GO" id="GO:0006012">
    <property type="term" value="P:galactose metabolic process"/>
    <property type="evidence" value="ECO:0007669"/>
    <property type="project" value="InterPro"/>
</dbReference>
<dbReference type="CDD" id="cd03143">
    <property type="entry name" value="A4_beta-galactosidase_middle_domain"/>
    <property type="match status" value="1"/>
</dbReference>
<dbReference type="Gene3D" id="3.40.50.880">
    <property type="match status" value="1"/>
</dbReference>
<dbReference type="Gene3D" id="3.20.20.80">
    <property type="entry name" value="Glycosidases"/>
    <property type="match status" value="1"/>
</dbReference>
<dbReference type="Gene3D" id="2.60.40.1180">
    <property type="entry name" value="Golgi alpha-mannosidase II"/>
    <property type="match status" value="1"/>
</dbReference>
<dbReference type="InterPro" id="IPR013739">
    <property type="entry name" value="Beta_galactosidase_C"/>
</dbReference>
<dbReference type="InterPro" id="IPR013738">
    <property type="entry name" value="Beta_galactosidase_Trimer"/>
</dbReference>
<dbReference type="InterPro" id="IPR029062">
    <property type="entry name" value="Class_I_gatase-like"/>
</dbReference>
<dbReference type="InterPro" id="IPR003476">
    <property type="entry name" value="Glyco_hydro_42"/>
</dbReference>
<dbReference type="InterPro" id="IPR013529">
    <property type="entry name" value="Glyco_hydro_42_N"/>
</dbReference>
<dbReference type="InterPro" id="IPR013780">
    <property type="entry name" value="Glyco_hydro_b"/>
</dbReference>
<dbReference type="InterPro" id="IPR017853">
    <property type="entry name" value="Glycoside_hydrolase_SF"/>
</dbReference>
<dbReference type="PANTHER" id="PTHR36447">
    <property type="entry name" value="BETA-GALACTOSIDASE GANA"/>
    <property type="match status" value="1"/>
</dbReference>
<dbReference type="PANTHER" id="PTHR36447:SF1">
    <property type="entry name" value="BETA-GALACTOSIDASE GANA"/>
    <property type="match status" value="1"/>
</dbReference>
<dbReference type="Pfam" id="PF02449">
    <property type="entry name" value="Glyco_hydro_42"/>
    <property type="match status" value="1"/>
</dbReference>
<dbReference type="Pfam" id="PF08533">
    <property type="entry name" value="Glyco_hydro_42C"/>
    <property type="match status" value="1"/>
</dbReference>
<dbReference type="Pfam" id="PF08532">
    <property type="entry name" value="Glyco_hydro_42M"/>
    <property type="match status" value="1"/>
</dbReference>
<dbReference type="PIRSF" id="PIRSF001084">
    <property type="entry name" value="B-galactosidase"/>
    <property type="match status" value="1"/>
</dbReference>
<dbReference type="SUPFAM" id="SSF51445">
    <property type="entry name" value="(Trans)glycosidases"/>
    <property type="match status" value="1"/>
</dbReference>
<dbReference type="SUPFAM" id="SSF52317">
    <property type="entry name" value="Class I glutamine amidotransferase-like"/>
    <property type="match status" value="1"/>
</dbReference>
<accession>Q93GI5</accession>
<name>BGAL_BIFLI</name>